<keyword id="KW-0687">Ribonucleoprotein</keyword>
<keyword id="KW-0689">Ribosomal protein</keyword>
<keyword id="KW-0694">RNA-binding</keyword>
<keyword id="KW-0699">rRNA-binding</keyword>
<keyword id="KW-0820">tRNA-binding</keyword>
<protein>
    <recommendedName>
        <fullName evidence="1">Small ribosomal subunit protein uS13</fullName>
    </recommendedName>
    <alternativeName>
        <fullName evidence="3">30S ribosomal protein S13</fullName>
    </alternativeName>
</protein>
<accession>Q6GEK7</accession>
<sequence>MARIAGVDIPREKRVVISLTYIYGIGTSTAQKILEEANVSADTRVKDLTDDELGRIREVVDGYKVEGDLRRETNLNIKRLMEISSYRGIRHRRGLPVRGQKTKNNARTRKGPVKTVANKKK</sequence>
<gene>
    <name evidence="1" type="primary">rpsM</name>
    <name type="ordered locus">SAR2311</name>
</gene>
<dbReference type="EMBL" id="BX571856">
    <property type="protein sequence ID" value="CAG41292.1"/>
    <property type="molecule type" value="Genomic_DNA"/>
</dbReference>
<dbReference type="RefSeq" id="WP_000090796.1">
    <property type="nucleotide sequence ID" value="NC_002952.2"/>
</dbReference>
<dbReference type="SMR" id="Q6GEK7"/>
<dbReference type="GeneID" id="66840438"/>
<dbReference type="KEGG" id="sar:SAR2311"/>
<dbReference type="HOGENOM" id="CLU_103849_1_1_9"/>
<dbReference type="Proteomes" id="UP000000596">
    <property type="component" value="Chromosome"/>
</dbReference>
<dbReference type="GO" id="GO:0005829">
    <property type="term" value="C:cytosol"/>
    <property type="evidence" value="ECO:0007669"/>
    <property type="project" value="TreeGrafter"/>
</dbReference>
<dbReference type="GO" id="GO:0015935">
    <property type="term" value="C:small ribosomal subunit"/>
    <property type="evidence" value="ECO:0007669"/>
    <property type="project" value="TreeGrafter"/>
</dbReference>
<dbReference type="GO" id="GO:0019843">
    <property type="term" value="F:rRNA binding"/>
    <property type="evidence" value="ECO:0007669"/>
    <property type="project" value="UniProtKB-UniRule"/>
</dbReference>
<dbReference type="GO" id="GO:0003735">
    <property type="term" value="F:structural constituent of ribosome"/>
    <property type="evidence" value="ECO:0007669"/>
    <property type="project" value="InterPro"/>
</dbReference>
<dbReference type="GO" id="GO:0000049">
    <property type="term" value="F:tRNA binding"/>
    <property type="evidence" value="ECO:0007669"/>
    <property type="project" value="UniProtKB-UniRule"/>
</dbReference>
<dbReference type="GO" id="GO:0006412">
    <property type="term" value="P:translation"/>
    <property type="evidence" value="ECO:0007669"/>
    <property type="project" value="UniProtKB-UniRule"/>
</dbReference>
<dbReference type="FunFam" id="1.10.8.50:FF:000001">
    <property type="entry name" value="30S ribosomal protein S13"/>
    <property type="match status" value="1"/>
</dbReference>
<dbReference type="FunFam" id="4.10.910.10:FF:000001">
    <property type="entry name" value="30S ribosomal protein S13"/>
    <property type="match status" value="1"/>
</dbReference>
<dbReference type="Gene3D" id="1.10.8.50">
    <property type="match status" value="1"/>
</dbReference>
<dbReference type="Gene3D" id="4.10.910.10">
    <property type="entry name" value="30s ribosomal protein s13, domain 2"/>
    <property type="match status" value="1"/>
</dbReference>
<dbReference type="HAMAP" id="MF_01315">
    <property type="entry name" value="Ribosomal_uS13"/>
    <property type="match status" value="1"/>
</dbReference>
<dbReference type="InterPro" id="IPR027437">
    <property type="entry name" value="Rbsml_uS13_C"/>
</dbReference>
<dbReference type="InterPro" id="IPR001892">
    <property type="entry name" value="Ribosomal_uS13"/>
</dbReference>
<dbReference type="InterPro" id="IPR010979">
    <property type="entry name" value="Ribosomal_uS13-like_H2TH"/>
</dbReference>
<dbReference type="InterPro" id="IPR019980">
    <property type="entry name" value="Ribosomal_uS13_bac-type"/>
</dbReference>
<dbReference type="InterPro" id="IPR018269">
    <property type="entry name" value="Ribosomal_uS13_CS"/>
</dbReference>
<dbReference type="NCBIfam" id="TIGR03631">
    <property type="entry name" value="uS13_bact"/>
    <property type="match status" value="1"/>
</dbReference>
<dbReference type="PANTHER" id="PTHR10871">
    <property type="entry name" value="30S RIBOSOMAL PROTEIN S13/40S RIBOSOMAL PROTEIN S18"/>
    <property type="match status" value="1"/>
</dbReference>
<dbReference type="PANTHER" id="PTHR10871:SF1">
    <property type="entry name" value="SMALL RIBOSOMAL SUBUNIT PROTEIN US13M"/>
    <property type="match status" value="1"/>
</dbReference>
<dbReference type="Pfam" id="PF00416">
    <property type="entry name" value="Ribosomal_S13"/>
    <property type="match status" value="1"/>
</dbReference>
<dbReference type="PIRSF" id="PIRSF002134">
    <property type="entry name" value="Ribosomal_S13"/>
    <property type="match status" value="1"/>
</dbReference>
<dbReference type="SUPFAM" id="SSF46946">
    <property type="entry name" value="S13-like H2TH domain"/>
    <property type="match status" value="1"/>
</dbReference>
<dbReference type="PROSITE" id="PS00646">
    <property type="entry name" value="RIBOSOMAL_S13_1"/>
    <property type="match status" value="1"/>
</dbReference>
<dbReference type="PROSITE" id="PS50159">
    <property type="entry name" value="RIBOSOMAL_S13_2"/>
    <property type="match status" value="1"/>
</dbReference>
<reference key="1">
    <citation type="journal article" date="2004" name="Proc. Natl. Acad. Sci. U.S.A.">
        <title>Complete genomes of two clinical Staphylococcus aureus strains: evidence for the rapid evolution of virulence and drug resistance.</title>
        <authorList>
            <person name="Holden M.T.G."/>
            <person name="Feil E.J."/>
            <person name="Lindsay J.A."/>
            <person name="Peacock S.J."/>
            <person name="Day N.P.J."/>
            <person name="Enright M.C."/>
            <person name="Foster T.J."/>
            <person name="Moore C.E."/>
            <person name="Hurst L."/>
            <person name="Atkin R."/>
            <person name="Barron A."/>
            <person name="Bason N."/>
            <person name="Bentley S.D."/>
            <person name="Chillingworth C."/>
            <person name="Chillingworth T."/>
            <person name="Churcher C."/>
            <person name="Clark L."/>
            <person name="Corton C."/>
            <person name="Cronin A."/>
            <person name="Doggett J."/>
            <person name="Dowd L."/>
            <person name="Feltwell T."/>
            <person name="Hance Z."/>
            <person name="Harris B."/>
            <person name="Hauser H."/>
            <person name="Holroyd S."/>
            <person name="Jagels K."/>
            <person name="James K.D."/>
            <person name="Lennard N."/>
            <person name="Line A."/>
            <person name="Mayes R."/>
            <person name="Moule S."/>
            <person name="Mungall K."/>
            <person name="Ormond D."/>
            <person name="Quail M.A."/>
            <person name="Rabbinowitsch E."/>
            <person name="Rutherford K.M."/>
            <person name="Sanders M."/>
            <person name="Sharp S."/>
            <person name="Simmonds M."/>
            <person name="Stevens K."/>
            <person name="Whitehead S."/>
            <person name="Barrell B.G."/>
            <person name="Spratt B.G."/>
            <person name="Parkhill J."/>
        </authorList>
    </citation>
    <scope>NUCLEOTIDE SEQUENCE [LARGE SCALE GENOMIC DNA]</scope>
    <source>
        <strain>MRSA252</strain>
    </source>
</reference>
<name>RS13_STAAR</name>
<proteinExistence type="inferred from homology"/>
<comment type="function">
    <text evidence="1">Located at the top of the head of the 30S subunit, it contacts several helices of the 16S rRNA. In the 70S ribosome it contacts the 23S rRNA (bridge B1a) and protein L5 of the 50S subunit (bridge B1b), connecting the 2 subunits; these bridges are implicated in subunit movement. Contacts the tRNAs in the A and P-sites.</text>
</comment>
<comment type="subunit">
    <text evidence="1">Part of the 30S ribosomal subunit. Forms a loose heterodimer with protein S19. Forms two bridges to the 50S subunit in the 70S ribosome.</text>
</comment>
<comment type="similarity">
    <text evidence="1">Belongs to the universal ribosomal protein uS13 family.</text>
</comment>
<feature type="chain" id="PRO_0000132137" description="Small ribosomal subunit protein uS13">
    <location>
        <begin position="1"/>
        <end position="121"/>
    </location>
</feature>
<feature type="region of interest" description="Disordered" evidence="2">
    <location>
        <begin position="91"/>
        <end position="121"/>
    </location>
</feature>
<organism>
    <name type="scientific">Staphylococcus aureus (strain MRSA252)</name>
    <dbReference type="NCBI Taxonomy" id="282458"/>
    <lineage>
        <taxon>Bacteria</taxon>
        <taxon>Bacillati</taxon>
        <taxon>Bacillota</taxon>
        <taxon>Bacilli</taxon>
        <taxon>Bacillales</taxon>
        <taxon>Staphylococcaceae</taxon>
        <taxon>Staphylococcus</taxon>
    </lineage>
</organism>
<evidence type="ECO:0000255" key="1">
    <source>
        <dbReference type="HAMAP-Rule" id="MF_01315"/>
    </source>
</evidence>
<evidence type="ECO:0000256" key="2">
    <source>
        <dbReference type="SAM" id="MobiDB-lite"/>
    </source>
</evidence>
<evidence type="ECO:0000305" key="3"/>